<sequence length="860" mass="97452">MATDLGELLVPYMPTIRVPRTGDRVFKSECAFSYDSPESEGGLYVCMNSFLGFGREHVERHYRKTGQSVYMHLKRHVKEKATGAAGGAIPRRRNGKVFLDLELNRDFNGDDYEYEDEAKLVIFPDHYEIPLPNIEELPALVTIACDAVLNAPSPYKKQESDSWEEEIQVSRHARSLRQLDNGVRIPPSGWKCAKCEMRENLWLNLTDGSVLCGKWFFDGSGGNGHALEHYRESNFPLAVKLNTITPDGADIYSFDEEEAVLDPHISEHLLHFGIDMLQMQRTENGHHTDNHVQPRISDWEVIQEAGLKLKPVYGSGYTGIKNLGNSCYLSTTMQVLFSIPEFQRAYAGNLQRIFDYSPLDPTQDFNTQMAKLGHGLLSGQYSKPPMKSELIEQVMKEEHKQQQQRGISPKMFKALVSKGHPEFSSNRQQDAHEFLLHLINLVERNNSGSENPSDVFRFIVEERTQCCQSQKVRYTQRVDYLMQLPVPLEAASNREELIAYEGKRKEAEENMRPLPEVVRARVPFTACLQAFTEPENVPDFWSSALQAKSAGVKTSRFATFPEYMIVQLKKFTFGVDWVPKKLDMSVDVPDFLDLNRLRATGLQAGEEELPDLTPPIVIPEDTRDSSTNNSLESPEIDESSVMQLAEMGFPLEACRKAVYYTGNMGAEMAFNWIIAHMEEPDFAEPLAVPTYMESDLPSPSLPTTSALDNQPPEESISILTSMGFPRHHTIQALKASNNNLERALDWIFTHPDCEDESEAMSDTADTEPNDNSFSNANAHTDSSLSPDQDLSSPRVRDGPGRYELFAFISHMGTSTMSGHYVCHIKKEGRWLIYNDHKVCLSERPPKDLGYMYFYRRLSSC</sequence>
<gene>
    <name type="primary">usp13</name>
    <name type="ORF">wu:fc61g08</name>
</gene>
<evidence type="ECO:0000250" key="1"/>
<evidence type="ECO:0000250" key="2">
    <source>
        <dbReference type="UniProtKB" id="Q92995"/>
    </source>
</evidence>
<evidence type="ECO:0000255" key="3">
    <source>
        <dbReference type="PROSITE-ProRule" id="PRU00212"/>
    </source>
</evidence>
<evidence type="ECO:0000255" key="4">
    <source>
        <dbReference type="PROSITE-ProRule" id="PRU00502"/>
    </source>
</evidence>
<evidence type="ECO:0000255" key="5">
    <source>
        <dbReference type="PROSITE-ProRule" id="PRU10093"/>
    </source>
</evidence>
<evidence type="ECO:0000256" key="6">
    <source>
        <dbReference type="SAM" id="MobiDB-lite"/>
    </source>
</evidence>
<evidence type="ECO:0000305" key="7"/>
<protein>
    <recommendedName>
        <fullName>Ubiquitin carboxyl-terminal hydrolase 13</fullName>
        <ecNumber>3.4.19.12</ecNumber>
    </recommendedName>
    <alternativeName>
        <fullName>Deubiquitinating enzyme 13</fullName>
    </alternativeName>
    <alternativeName>
        <fullName>Ubiquitin thioesterase 13</fullName>
    </alternativeName>
    <alternativeName>
        <fullName>Ubiquitin-specific-processing protease 13</fullName>
    </alternativeName>
</protein>
<comment type="function">
    <text evidence="2">Deubiquitinase that mediates deubiquitination of target proteins and is involved in various processes such as autophagy and endoplasmic reticulum-associated degradation (ERAD).</text>
</comment>
<comment type="catalytic activity">
    <reaction>
        <text>Thiol-dependent hydrolysis of ester, thioester, amide, peptide and isopeptide bonds formed by the C-terminal Gly of ubiquitin (a 76-residue protein attached to proteins as an intracellular targeting signal).</text>
        <dbReference type="EC" id="3.4.19.12"/>
    </reaction>
</comment>
<comment type="activity regulation">
    <text evidence="1">Specifically inhibited by spautin-1 (specific and potent autophagy inhibitor-1), a derivative of MBCQ that binds to usp13 and inhibits deubiquitinase activity.</text>
</comment>
<comment type="domain">
    <text evidence="1">The UBP-type zinc finger has lost its ability to bind ubiquitin and usp13 is not activated by unanchored ubiquitin.</text>
</comment>
<comment type="domain">
    <text evidence="1">The UBA domains mediate binding to ubiquitin.</text>
</comment>
<comment type="similarity">
    <text evidence="7">Belongs to the peptidase C19 family.</text>
</comment>
<accession>F1QFS9</accession>
<accession>A5D8T1</accession>
<keyword id="KW-0072">Autophagy</keyword>
<keyword id="KW-0378">Hydrolase</keyword>
<keyword id="KW-0479">Metal-binding</keyword>
<keyword id="KW-0645">Protease</keyword>
<keyword id="KW-1185">Reference proteome</keyword>
<keyword id="KW-0677">Repeat</keyword>
<keyword id="KW-0788">Thiol protease</keyword>
<keyword id="KW-0833">Ubl conjugation pathway</keyword>
<keyword id="KW-0862">Zinc</keyword>
<keyword id="KW-0863">Zinc-finger</keyword>
<dbReference type="EC" id="3.4.19.12"/>
<dbReference type="EMBL" id="AL928701">
    <property type="status" value="NOT_ANNOTATED_CDS"/>
    <property type="molecule type" value="Genomic_DNA"/>
</dbReference>
<dbReference type="EMBL" id="CU459215">
    <property type="status" value="NOT_ANNOTATED_CDS"/>
    <property type="molecule type" value="Genomic_DNA"/>
</dbReference>
<dbReference type="EMBL" id="BC141800">
    <property type="protein sequence ID" value="AAI41801.1"/>
    <property type="molecule type" value="mRNA"/>
</dbReference>
<dbReference type="RefSeq" id="NP_001091856.1">
    <property type="nucleotide sequence ID" value="NM_001098386.1"/>
</dbReference>
<dbReference type="SMR" id="F1QFS9"/>
<dbReference type="BioGRID" id="284243">
    <property type="interactions" value="1"/>
</dbReference>
<dbReference type="FunCoup" id="F1QFS9">
    <property type="interactions" value="1812"/>
</dbReference>
<dbReference type="STRING" id="7955.ENSDARP00000065292"/>
<dbReference type="MEROPS" id="C19.012"/>
<dbReference type="PaxDb" id="7955-ENSDARP00000065292"/>
<dbReference type="Ensembl" id="ENSDART00000065293">
    <property type="protein sequence ID" value="ENSDARP00000065292"/>
    <property type="gene ID" value="ENSDARG00000079198"/>
</dbReference>
<dbReference type="GeneID" id="558011"/>
<dbReference type="KEGG" id="dre:558011"/>
<dbReference type="AGR" id="ZFIN:ZDB-GENE-080724-7"/>
<dbReference type="CTD" id="8975"/>
<dbReference type="ZFIN" id="ZDB-GENE-080724-7">
    <property type="gene designation" value="usp13"/>
</dbReference>
<dbReference type="eggNOG" id="KOG0944">
    <property type="taxonomic scope" value="Eukaryota"/>
</dbReference>
<dbReference type="HOGENOM" id="CLU_009884_1_0_1"/>
<dbReference type="InParanoid" id="F1QFS9"/>
<dbReference type="OMA" id="ASTECAY"/>
<dbReference type="OrthoDB" id="361536at2759"/>
<dbReference type="PhylomeDB" id="F1QFS9"/>
<dbReference type="TreeFam" id="TF300576"/>
<dbReference type="Reactome" id="R-DRE-5689880">
    <property type="pathway name" value="Ub-specific processing proteases"/>
</dbReference>
<dbReference type="Reactome" id="R-DRE-8948751">
    <property type="pathway name" value="Regulation of PTEN stability and activity"/>
</dbReference>
<dbReference type="PRO" id="PR:F1QFS9"/>
<dbReference type="Proteomes" id="UP000000437">
    <property type="component" value="Alternate scaffold 6"/>
</dbReference>
<dbReference type="Proteomes" id="UP000000437">
    <property type="component" value="Chromosome 6"/>
</dbReference>
<dbReference type="Bgee" id="ENSDARG00000079198">
    <property type="expression patterns" value="Expressed in cardiac ventricle and 19 other cell types or tissues"/>
</dbReference>
<dbReference type="GO" id="GO:0005829">
    <property type="term" value="C:cytosol"/>
    <property type="evidence" value="ECO:0000318"/>
    <property type="project" value="GO_Central"/>
</dbReference>
<dbReference type="GO" id="GO:0005634">
    <property type="term" value="C:nucleus"/>
    <property type="evidence" value="ECO:0000318"/>
    <property type="project" value="GO_Central"/>
</dbReference>
<dbReference type="GO" id="GO:0004843">
    <property type="term" value="F:cysteine-type deubiquitinase activity"/>
    <property type="evidence" value="ECO:0000250"/>
    <property type="project" value="UniProtKB"/>
</dbReference>
<dbReference type="GO" id="GO:0004197">
    <property type="term" value="F:cysteine-type endopeptidase activity"/>
    <property type="evidence" value="ECO:0000250"/>
    <property type="project" value="UniProtKB"/>
</dbReference>
<dbReference type="GO" id="GO:0043130">
    <property type="term" value="F:ubiquitin binding"/>
    <property type="evidence" value="ECO:0000250"/>
    <property type="project" value="UniProtKB"/>
</dbReference>
<dbReference type="GO" id="GO:0008270">
    <property type="term" value="F:zinc ion binding"/>
    <property type="evidence" value="ECO:0007669"/>
    <property type="project" value="UniProtKB-KW"/>
</dbReference>
<dbReference type="GO" id="GO:0006914">
    <property type="term" value="P:autophagy"/>
    <property type="evidence" value="ECO:0007669"/>
    <property type="project" value="UniProtKB-KW"/>
</dbReference>
<dbReference type="GO" id="GO:0008283">
    <property type="term" value="P:cell population proliferation"/>
    <property type="evidence" value="ECO:0000250"/>
    <property type="project" value="UniProtKB"/>
</dbReference>
<dbReference type="GO" id="GO:0070536">
    <property type="term" value="P:protein K63-linked deubiquitination"/>
    <property type="evidence" value="ECO:0000250"/>
    <property type="project" value="UniProtKB"/>
</dbReference>
<dbReference type="GO" id="GO:0050821">
    <property type="term" value="P:protein stabilization"/>
    <property type="evidence" value="ECO:0000250"/>
    <property type="project" value="UniProtKB"/>
</dbReference>
<dbReference type="GO" id="GO:0006508">
    <property type="term" value="P:proteolysis"/>
    <property type="evidence" value="ECO:0007669"/>
    <property type="project" value="UniProtKB-KW"/>
</dbReference>
<dbReference type="GO" id="GO:0010506">
    <property type="term" value="P:regulation of autophagy"/>
    <property type="evidence" value="ECO:0000250"/>
    <property type="project" value="UniProtKB"/>
</dbReference>
<dbReference type="GO" id="GO:0006355">
    <property type="term" value="P:regulation of DNA-templated transcription"/>
    <property type="evidence" value="ECO:0000250"/>
    <property type="project" value="UniProtKB"/>
</dbReference>
<dbReference type="GO" id="GO:0031647">
    <property type="term" value="P:regulation of protein stability"/>
    <property type="evidence" value="ECO:0000318"/>
    <property type="project" value="GO_Central"/>
</dbReference>
<dbReference type="CDD" id="cd02658">
    <property type="entry name" value="Peptidase_C19B"/>
    <property type="match status" value="1"/>
</dbReference>
<dbReference type="CDD" id="cd14384">
    <property type="entry name" value="UBA1_UBP13"/>
    <property type="match status" value="1"/>
</dbReference>
<dbReference type="CDD" id="cd14387">
    <property type="entry name" value="UBA2_UBP13"/>
    <property type="match status" value="1"/>
</dbReference>
<dbReference type="FunFam" id="1.10.8.10:FF:000016">
    <property type="entry name" value="Ubiquitin carboxyl-terminal hydrolase"/>
    <property type="match status" value="1"/>
</dbReference>
<dbReference type="FunFam" id="3.30.40.10:FF:000026">
    <property type="entry name" value="Ubiquitin carboxyl-terminal hydrolase"/>
    <property type="match status" value="1"/>
</dbReference>
<dbReference type="FunFam" id="3.30.40.10:FF:000770">
    <property type="entry name" value="Ubiquitin carboxyl-terminal hydrolase"/>
    <property type="match status" value="1"/>
</dbReference>
<dbReference type="FunFam" id="3.90.70.10:FF:000063">
    <property type="entry name" value="Ubiquitin carboxyl-terminal hydrolase"/>
    <property type="match status" value="1"/>
</dbReference>
<dbReference type="Gene3D" id="3.90.70.10">
    <property type="entry name" value="Cysteine proteinases"/>
    <property type="match status" value="2"/>
</dbReference>
<dbReference type="Gene3D" id="1.10.8.10">
    <property type="entry name" value="DNA helicase RuvA subunit, C-terminal domain"/>
    <property type="match status" value="2"/>
</dbReference>
<dbReference type="Gene3D" id="3.30.40.10">
    <property type="entry name" value="Zinc/RING finger domain, C3HC4 (zinc finger)"/>
    <property type="match status" value="2"/>
</dbReference>
<dbReference type="InterPro" id="IPR038765">
    <property type="entry name" value="Papain-like_cys_pep_sf"/>
</dbReference>
<dbReference type="InterPro" id="IPR050164">
    <property type="entry name" value="Peptidase_C19"/>
</dbReference>
<dbReference type="InterPro" id="IPR001394">
    <property type="entry name" value="Peptidase_C19_UCH"/>
</dbReference>
<dbReference type="InterPro" id="IPR015940">
    <property type="entry name" value="UBA"/>
</dbReference>
<dbReference type="InterPro" id="IPR009060">
    <property type="entry name" value="UBA-like_sf"/>
</dbReference>
<dbReference type="InterPro" id="IPR016652">
    <property type="entry name" value="Ubiquitinyl_hydrolase"/>
</dbReference>
<dbReference type="InterPro" id="IPR041432">
    <property type="entry name" value="UBP13_Znf-UBP_var"/>
</dbReference>
<dbReference type="InterPro" id="IPR018200">
    <property type="entry name" value="USP_CS"/>
</dbReference>
<dbReference type="InterPro" id="IPR028889">
    <property type="entry name" value="USP_dom"/>
</dbReference>
<dbReference type="InterPro" id="IPR013083">
    <property type="entry name" value="Znf_RING/FYVE/PHD"/>
</dbReference>
<dbReference type="InterPro" id="IPR001607">
    <property type="entry name" value="Znf_UBP"/>
</dbReference>
<dbReference type="PANTHER" id="PTHR24006">
    <property type="entry name" value="UBIQUITIN CARBOXYL-TERMINAL HYDROLASE"/>
    <property type="match status" value="1"/>
</dbReference>
<dbReference type="PANTHER" id="PTHR24006:SF682">
    <property type="entry name" value="UBIQUITIN CARBOXYL-TERMINAL HYDROLASE 13"/>
    <property type="match status" value="1"/>
</dbReference>
<dbReference type="Pfam" id="PF00627">
    <property type="entry name" value="UBA"/>
    <property type="match status" value="1"/>
</dbReference>
<dbReference type="Pfam" id="PF22562">
    <property type="entry name" value="UBA_7"/>
    <property type="match status" value="1"/>
</dbReference>
<dbReference type="Pfam" id="PF00443">
    <property type="entry name" value="UCH"/>
    <property type="match status" value="1"/>
</dbReference>
<dbReference type="Pfam" id="PF02148">
    <property type="entry name" value="zf-UBP"/>
    <property type="match status" value="1"/>
</dbReference>
<dbReference type="Pfam" id="PF17807">
    <property type="entry name" value="zf-UBP_var"/>
    <property type="match status" value="1"/>
</dbReference>
<dbReference type="PIRSF" id="PIRSF016308">
    <property type="entry name" value="UBP"/>
    <property type="match status" value="1"/>
</dbReference>
<dbReference type="SMART" id="SM00165">
    <property type="entry name" value="UBA"/>
    <property type="match status" value="2"/>
</dbReference>
<dbReference type="SMART" id="SM00290">
    <property type="entry name" value="ZnF_UBP"/>
    <property type="match status" value="1"/>
</dbReference>
<dbReference type="SUPFAM" id="SSF54001">
    <property type="entry name" value="Cysteine proteinases"/>
    <property type="match status" value="1"/>
</dbReference>
<dbReference type="SUPFAM" id="SSF57850">
    <property type="entry name" value="RING/U-box"/>
    <property type="match status" value="1"/>
</dbReference>
<dbReference type="SUPFAM" id="SSF46934">
    <property type="entry name" value="UBA-like"/>
    <property type="match status" value="1"/>
</dbReference>
<dbReference type="PROSITE" id="PS50030">
    <property type="entry name" value="UBA"/>
    <property type="match status" value="2"/>
</dbReference>
<dbReference type="PROSITE" id="PS00973">
    <property type="entry name" value="USP_2"/>
    <property type="match status" value="1"/>
</dbReference>
<dbReference type="PROSITE" id="PS50235">
    <property type="entry name" value="USP_3"/>
    <property type="match status" value="1"/>
</dbReference>
<dbReference type="PROSITE" id="PS50271">
    <property type="entry name" value="ZF_UBP"/>
    <property type="match status" value="1"/>
</dbReference>
<reference key="1">
    <citation type="journal article" date="2013" name="Nature">
        <title>The zebrafish reference genome sequence and its relationship to the human genome.</title>
        <authorList>
            <person name="Howe K."/>
            <person name="Clark M.D."/>
            <person name="Torroja C.F."/>
            <person name="Torrance J."/>
            <person name="Berthelot C."/>
            <person name="Muffato M."/>
            <person name="Collins J.E."/>
            <person name="Humphray S."/>
            <person name="McLaren K."/>
            <person name="Matthews L."/>
            <person name="McLaren S."/>
            <person name="Sealy I."/>
            <person name="Caccamo M."/>
            <person name="Churcher C."/>
            <person name="Scott C."/>
            <person name="Barrett J.C."/>
            <person name="Koch R."/>
            <person name="Rauch G.J."/>
            <person name="White S."/>
            <person name="Chow W."/>
            <person name="Kilian B."/>
            <person name="Quintais L.T."/>
            <person name="Guerra-Assuncao J.A."/>
            <person name="Zhou Y."/>
            <person name="Gu Y."/>
            <person name="Yen J."/>
            <person name="Vogel J.H."/>
            <person name="Eyre T."/>
            <person name="Redmond S."/>
            <person name="Banerjee R."/>
            <person name="Chi J."/>
            <person name="Fu B."/>
            <person name="Langley E."/>
            <person name="Maguire S.F."/>
            <person name="Laird G.K."/>
            <person name="Lloyd D."/>
            <person name="Kenyon E."/>
            <person name="Donaldson S."/>
            <person name="Sehra H."/>
            <person name="Almeida-King J."/>
            <person name="Loveland J."/>
            <person name="Trevanion S."/>
            <person name="Jones M."/>
            <person name="Quail M."/>
            <person name="Willey D."/>
            <person name="Hunt A."/>
            <person name="Burton J."/>
            <person name="Sims S."/>
            <person name="McLay K."/>
            <person name="Plumb B."/>
            <person name="Davis J."/>
            <person name="Clee C."/>
            <person name="Oliver K."/>
            <person name="Clark R."/>
            <person name="Riddle C."/>
            <person name="Elliot D."/>
            <person name="Threadgold G."/>
            <person name="Harden G."/>
            <person name="Ware D."/>
            <person name="Begum S."/>
            <person name="Mortimore B."/>
            <person name="Kerry G."/>
            <person name="Heath P."/>
            <person name="Phillimore B."/>
            <person name="Tracey A."/>
            <person name="Corby N."/>
            <person name="Dunn M."/>
            <person name="Johnson C."/>
            <person name="Wood J."/>
            <person name="Clark S."/>
            <person name="Pelan S."/>
            <person name="Griffiths G."/>
            <person name="Smith M."/>
            <person name="Glithero R."/>
            <person name="Howden P."/>
            <person name="Barker N."/>
            <person name="Lloyd C."/>
            <person name="Stevens C."/>
            <person name="Harley J."/>
            <person name="Holt K."/>
            <person name="Panagiotidis G."/>
            <person name="Lovell J."/>
            <person name="Beasley H."/>
            <person name="Henderson C."/>
            <person name="Gordon D."/>
            <person name="Auger K."/>
            <person name="Wright D."/>
            <person name="Collins J."/>
            <person name="Raisen C."/>
            <person name="Dyer L."/>
            <person name="Leung K."/>
            <person name="Robertson L."/>
            <person name="Ambridge K."/>
            <person name="Leongamornlert D."/>
            <person name="McGuire S."/>
            <person name="Gilderthorp R."/>
            <person name="Griffiths C."/>
            <person name="Manthravadi D."/>
            <person name="Nichol S."/>
            <person name="Barker G."/>
            <person name="Whitehead S."/>
            <person name="Kay M."/>
            <person name="Brown J."/>
            <person name="Murnane C."/>
            <person name="Gray E."/>
            <person name="Humphries M."/>
            <person name="Sycamore N."/>
            <person name="Barker D."/>
            <person name="Saunders D."/>
            <person name="Wallis J."/>
            <person name="Babbage A."/>
            <person name="Hammond S."/>
            <person name="Mashreghi-Mohammadi M."/>
            <person name="Barr L."/>
            <person name="Martin S."/>
            <person name="Wray P."/>
            <person name="Ellington A."/>
            <person name="Matthews N."/>
            <person name="Ellwood M."/>
            <person name="Woodmansey R."/>
            <person name="Clark G."/>
            <person name="Cooper J."/>
            <person name="Tromans A."/>
            <person name="Grafham D."/>
            <person name="Skuce C."/>
            <person name="Pandian R."/>
            <person name="Andrews R."/>
            <person name="Harrison E."/>
            <person name="Kimberley A."/>
            <person name="Garnett J."/>
            <person name="Fosker N."/>
            <person name="Hall R."/>
            <person name="Garner P."/>
            <person name="Kelly D."/>
            <person name="Bird C."/>
            <person name="Palmer S."/>
            <person name="Gehring I."/>
            <person name="Berger A."/>
            <person name="Dooley C.M."/>
            <person name="Ersan-Urun Z."/>
            <person name="Eser C."/>
            <person name="Geiger H."/>
            <person name="Geisler M."/>
            <person name="Karotki L."/>
            <person name="Kirn A."/>
            <person name="Konantz J."/>
            <person name="Konantz M."/>
            <person name="Oberlander M."/>
            <person name="Rudolph-Geiger S."/>
            <person name="Teucke M."/>
            <person name="Lanz C."/>
            <person name="Raddatz G."/>
            <person name="Osoegawa K."/>
            <person name="Zhu B."/>
            <person name="Rapp A."/>
            <person name="Widaa S."/>
            <person name="Langford C."/>
            <person name="Yang F."/>
            <person name="Schuster S.C."/>
            <person name="Carter N.P."/>
            <person name="Harrow J."/>
            <person name="Ning Z."/>
            <person name="Herrero J."/>
            <person name="Searle S.M."/>
            <person name="Enright A."/>
            <person name="Geisler R."/>
            <person name="Plasterk R.H."/>
            <person name="Lee C."/>
            <person name="Westerfield M."/>
            <person name="de Jong P.J."/>
            <person name="Zon L.I."/>
            <person name="Postlethwait J.H."/>
            <person name="Nusslein-Volhard C."/>
            <person name="Hubbard T.J."/>
            <person name="Roest Crollius H."/>
            <person name="Rogers J."/>
            <person name="Stemple D.L."/>
        </authorList>
    </citation>
    <scope>NUCLEOTIDE SEQUENCE [LARGE SCALE GENOMIC DNA]</scope>
    <source>
        <strain>Tuebingen</strain>
    </source>
</reference>
<reference key="2">
    <citation type="submission" date="2007-05" db="EMBL/GenBank/DDBJ databases">
        <authorList>
            <consortium name="NIH - Zebrafish Gene Collection (ZGC) project"/>
        </authorList>
    </citation>
    <scope>NUCLEOTIDE SEQUENCE [LARGE SCALE MRNA]</scope>
    <source>
        <tissue>Embryo</tissue>
    </source>
</reference>
<proteinExistence type="evidence at transcript level"/>
<feature type="chain" id="PRO_0000418013" description="Ubiquitin carboxyl-terminal hydrolase 13">
    <location>
        <begin position="1"/>
        <end position="860"/>
    </location>
</feature>
<feature type="domain" description="USP">
    <location>
        <begin position="318"/>
        <end position="857"/>
    </location>
</feature>
<feature type="domain" description="UBA 1" evidence="3">
    <location>
        <begin position="635"/>
        <end position="676"/>
    </location>
</feature>
<feature type="domain" description="UBA 2" evidence="3">
    <location>
        <begin position="710"/>
        <end position="750"/>
    </location>
</feature>
<feature type="zinc finger region" description="UBP-type; degenerate" evidence="4">
    <location>
        <begin position="168"/>
        <end position="276"/>
    </location>
</feature>
<feature type="region of interest" description="Disordered" evidence="6">
    <location>
        <begin position="611"/>
        <end position="636"/>
    </location>
</feature>
<feature type="region of interest" description="Disordered" evidence="6">
    <location>
        <begin position="755"/>
        <end position="795"/>
    </location>
</feature>
<feature type="compositionally biased region" description="Acidic residues" evidence="6">
    <location>
        <begin position="755"/>
        <end position="768"/>
    </location>
</feature>
<feature type="compositionally biased region" description="Polar residues" evidence="6">
    <location>
        <begin position="769"/>
        <end position="780"/>
    </location>
</feature>
<feature type="compositionally biased region" description="Low complexity" evidence="6">
    <location>
        <begin position="781"/>
        <end position="793"/>
    </location>
</feature>
<feature type="active site" description="Nucleophile" evidence="5">
    <location>
        <position position="327"/>
    </location>
</feature>
<feature type="active site" description="Proton acceptor" evidence="5">
    <location>
        <position position="819"/>
    </location>
</feature>
<feature type="binding site" evidence="4">
    <location>
        <position position="192"/>
    </location>
    <ligand>
        <name>Zn(2+)</name>
        <dbReference type="ChEBI" id="CHEBI:29105"/>
    </ligand>
</feature>
<feature type="binding site" evidence="4">
    <location>
        <position position="195"/>
    </location>
    <ligand>
        <name>Zn(2+)</name>
        <dbReference type="ChEBI" id="CHEBI:29105"/>
    </ligand>
</feature>
<feature type="binding site" evidence="4">
    <location>
        <position position="212"/>
    </location>
    <ligand>
        <name>Zn(2+)</name>
        <dbReference type="ChEBI" id="CHEBI:29105"/>
    </ligand>
</feature>
<feature type="binding site" evidence="4">
    <location>
        <position position="225"/>
    </location>
    <ligand>
        <name>Zn(2+)</name>
        <dbReference type="ChEBI" id="CHEBI:29105"/>
    </ligand>
</feature>
<feature type="sequence conflict" description="In Ref. 2; AAI41801." evidence="7" ref="2">
    <original>Q</original>
    <variation>R</variation>
    <location>
        <position position="731"/>
    </location>
</feature>
<name>UBP13_DANRE</name>
<organism>
    <name type="scientific">Danio rerio</name>
    <name type="common">Zebrafish</name>
    <name type="synonym">Brachydanio rerio</name>
    <dbReference type="NCBI Taxonomy" id="7955"/>
    <lineage>
        <taxon>Eukaryota</taxon>
        <taxon>Metazoa</taxon>
        <taxon>Chordata</taxon>
        <taxon>Craniata</taxon>
        <taxon>Vertebrata</taxon>
        <taxon>Euteleostomi</taxon>
        <taxon>Actinopterygii</taxon>
        <taxon>Neopterygii</taxon>
        <taxon>Teleostei</taxon>
        <taxon>Ostariophysi</taxon>
        <taxon>Cypriniformes</taxon>
        <taxon>Danionidae</taxon>
        <taxon>Danioninae</taxon>
        <taxon>Danio</taxon>
    </lineage>
</organism>